<keyword id="KW-0067">ATP-binding</keyword>
<keyword id="KW-0131">Cell cycle</keyword>
<keyword id="KW-0132">Cell division</keyword>
<keyword id="KW-0997">Cell inner membrane</keyword>
<keyword id="KW-1003">Cell membrane</keyword>
<keyword id="KW-0159">Chromosome partition</keyword>
<keyword id="KW-0238">DNA-binding</keyword>
<keyword id="KW-0472">Membrane</keyword>
<keyword id="KW-0547">Nucleotide-binding</keyword>
<keyword id="KW-1185">Reference proteome</keyword>
<keyword id="KW-0812">Transmembrane</keyword>
<keyword id="KW-1133">Transmembrane helix</keyword>
<reference key="1">
    <citation type="journal article" date="1998" name="Nature">
        <title>The genome sequence of Rickettsia prowazekii and the origin of mitochondria.</title>
        <authorList>
            <person name="Andersson S.G.E."/>
            <person name="Zomorodipour A."/>
            <person name="Andersson J.O."/>
            <person name="Sicheritz-Ponten T."/>
            <person name="Alsmark U.C.M."/>
            <person name="Podowski R.M."/>
            <person name="Naeslund A.K."/>
            <person name="Eriksson A.-S."/>
            <person name="Winkler H.H."/>
            <person name="Kurland C.G."/>
        </authorList>
    </citation>
    <scope>NUCLEOTIDE SEQUENCE [LARGE SCALE GENOMIC DNA]</scope>
    <source>
        <strain>Madrid E</strain>
    </source>
</reference>
<evidence type="ECO:0000250" key="1"/>
<evidence type="ECO:0000255" key="2"/>
<evidence type="ECO:0000255" key="3">
    <source>
        <dbReference type="PROSITE-ProRule" id="PRU00289"/>
    </source>
</evidence>
<evidence type="ECO:0000305" key="4"/>
<dbReference type="EMBL" id="AJ235273">
    <property type="protein sequence ID" value="CAA15248.1"/>
    <property type="molecule type" value="Genomic_DNA"/>
</dbReference>
<dbReference type="PIR" id="H71643">
    <property type="entry name" value="H71643"/>
</dbReference>
<dbReference type="RefSeq" id="NP_221172.1">
    <property type="nucleotide sequence ID" value="NC_000963.1"/>
</dbReference>
<dbReference type="RefSeq" id="WP_010886379.1">
    <property type="nucleotide sequence ID" value="NC_000963.1"/>
</dbReference>
<dbReference type="SMR" id="Q9ZCD4"/>
<dbReference type="STRING" id="272947.gene:17555892"/>
<dbReference type="EnsemblBacteria" id="CAA15248">
    <property type="protein sequence ID" value="CAA15248"/>
    <property type="gene ID" value="CAA15248"/>
</dbReference>
<dbReference type="KEGG" id="rpr:RP823"/>
<dbReference type="PATRIC" id="fig|272947.5.peg.859"/>
<dbReference type="eggNOG" id="COG1674">
    <property type="taxonomic scope" value="Bacteria"/>
</dbReference>
<dbReference type="HOGENOM" id="CLU_001981_9_7_5"/>
<dbReference type="OrthoDB" id="9807790at2"/>
<dbReference type="Proteomes" id="UP000002480">
    <property type="component" value="Chromosome"/>
</dbReference>
<dbReference type="GO" id="GO:0005886">
    <property type="term" value="C:plasma membrane"/>
    <property type="evidence" value="ECO:0007669"/>
    <property type="project" value="UniProtKB-SubCell"/>
</dbReference>
<dbReference type="GO" id="GO:0005524">
    <property type="term" value="F:ATP binding"/>
    <property type="evidence" value="ECO:0007669"/>
    <property type="project" value="UniProtKB-KW"/>
</dbReference>
<dbReference type="GO" id="GO:0016887">
    <property type="term" value="F:ATP hydrolysis activity"/>
    <property type="evidence" value="ECO:0007669"/>
    <property type="project" value="InterPro"/>
</dbReference>
<dbReference type="GO" id="GO:0003677">
    <property type="term" value="F:DNA binding"/>
    <property type="evidence" value="ECO:0007669"/>
    <property type="project" value="UniProtKB-KW"/>
</dbReference>
<dbReference type="GO" id="GO:0051301">
    <property type="term" value="P:cell division"/>
    <property type="evidence" value="ECO:0007669"/>
    <property type="project" value="UniProtKB-KW"/>
</dbReference>
<dbReference type="GO" id="GO:0007059">
    <property type="term" value="P:chromosome segregation"/>
    <property type="evidence" value="ECO:0007669"/>
    <property type="project" value="UniProtKB-KW"/>
</dbReference>
<dbReference type="Gene3D" id="3.30.980.40">
    <property type="match status" value="1"/>
</dbReference>
<dbReference type="Gene3D" id="3.40.50.300">
    <property type="entry name" value="P-loop containing nucleotide triphosphate hydrolases"/>
    <property type="match status" value="1"/>
</dbReference>
<dbReference type="Gene3D" id="1.10.10.10">
    <property type="entry name" value="Winged helix-like DNA-binding domain superfamily/Winged helix DNA-binding domain"/>
    <property type="match status" value="1"/>
</dbReference>
<dbReference type="InterPro" id="IPR003593">
    <property type="entry name" value="AAA+_ATPase"/>
</dbReference>
<dbReference type="InterPro" id="IPR050206">
    <property type="entry name" value="FtsK/SpoIIIE/SftA"/>
</dbReference>
<dbReference type="InterPro" id="IPR025199">
    <property type="entry name" value="FtsK_4TM"/>
</dbReference>
<dbReference type="InterPro" id="IPR041027">
    <property type="entry name" value="FtsK_alpha"/>
</dbReference>
<dbReference type="InterPro" id="IPR002543">
    <property type="entry name" value="FtsK_dom"/>
</dbReference>
<dbReference type="InterPro" id="IPR018541">
    <property type="entry name" value="Ftsk_gamma"/>
</dbReference>
<dbReference type="InterPro" id="IPR027417">
    <property type="entry name" value="P-loop_NTPase"/>
</dbReference>
<dbReference type="InterPro" id="IPR036388">
    <property type="entry name" value="WH-like_DNA-bd_sf"/>
</dbReference>
<dbReference type="InterPro" id="IPR036390">
    <property type="entry name" value="WH_DNA-bd_sf"/>
</dbReference>
<dbReference type="PANTHER" id="PTHR22683:SF41">
    <property type="entry name" value="DNA TRANSLOCASE FTSK"/>
    <property type="match status" value="1"/>
</dbReference>
<dbReference type="PANTHER" id="PTHR22683">
    <property type="entry name" value="SPORULATION PROTEIN RELATED"/>
    <property type="match status" value="1"/>
</dbReference>
<dbReference type="Pfam" id="PF13491">
    <property type="entry name" value="FtsK_4TM"/>
    <property type="match status" value="1"/>
</dbReference>
<dbReference type="Pfam" id="PF17854">
    <property type="entry name" value="FtsK_alpha"/>
    <property type="match status" value="1"/>
</dbReference>
<dbReference type="Pfam" id="PF09397">
    <property type="entry name" value="FtsK_gamma"/>
    <property type="match status" value="1"/>
</dbReference>
<dbReference type="Pfam" id="PF01580">
    <property type="entry name" value="FtsK_SpoIIIE"/>
    <property type="match status" value="1"/>
</dbReference>
<dbReference type="SMART" id="SM00382">
    <property type="entry name" value="AAA"/>
    <property type="match status" value="1"/>
</dbReference>
<dbReference type="SMART" id="SM00843">
    <property type="entry name" value="Ftsk_gamma"/>
    <property type="match status" value="1"/>
</dbReference>
<dbReference type="SUPFAM" id="SSF52540">
    <property type="entry name" value="P-loop containing nucleoside triphosphate hydrolases"/>
    <property type="match status" value="1"/>
</dbReference>
<dbReference type="SUPFAM" id="SSF46785">
    <property type="entry name" value="Winged helix' DNA-binding domain"/>
    <property type="match status" value="1"/>
</dbReference>
<dbReference type="PROSITE" id="PS50901">
    <property type="entry name" value="FTSK"/>
    <property type="match status" value="1"/>
</dbReference>
<name>FTSK_RICPR</name>
<organism>
    <name type="scientific">Rickettsia prowazekii (strain Madrid E)</name>
    <dbReference type="NCBI Taxonomy" id="272947"/>
    <lineage>
        <taxon>Bacteria</taxon>
        <taxon>Pseudomonadati</taxon>
        <taxon>Pseudomonadota</taxon>
        <taxon>Alphaproteobacteria</taxon>
        <taxon>Rickettsiales</taxon>
        <taxon>Rickettsiaceae</taxon>
        <taxon>Rickettsieae</taxon>
        <taxon>Rickettsia</taxon>
        <taxon>typhus group</taxon>
    </lineage>
</organism>
<protein>
    <recommendedName>
        <fullName>DNA translocase FtsK</fullName>
    </recommendedName>
</protein>
<sequence length="744" mass="82819">MLFYINKILSNNKVQAVILWIIGLAIVIVLMSYNIDDPSFNSVTTEYPSNLIGIVGAYLSDFLYQFFGLTSFIIPLACFIWGRNCWYGRYRSAFIRIFVVLLALISSSTLLSKIKLELIPASAGGAIGIIVSNFCERFINQLYLLLIFPTFIILVVLLEIKFTAISNFMIKLSKFLTYWILLFFNYVLPRLSLIGLFPIKNNDKLNITSFYQKPASGKVKFTEEASLIPANPIKCFIKPVCTKISQNQIASLPPISLLCDPKNNHVKGASSSELKQKAEELLTVLNDFGVKGQIININQGPVVTQYEFEPAAGTKTSRVVGLSDDIARSLSALSTRIAVIPGKNVLGIELPNKQREFFCLKELIETNEYQDKSILLPLVLGKDLAGKPLIADLAKMPHLLVAGTTGSGKSVGINAMIVSLLYRYTPEECRFIMIDPKMLELSAYDGIPHLLTPVVTEPSKAVIALKWAVKEMENRYRMMSNIGVKNIAGYNAKILEAVKENRVIERPIQTGFDPETGKPIYETVTMNMVKLPYIVVIVDEMADLMLVSGKDIEMLIQRLAQMARAAGIHIIMATQRPSVDVITGVIKANFPSRISFKVTSKIDSRTILGEQGSEQLLGMGDMLFMGNTSKISRVHGPFVNEAEIAKITEYLKETSMPVYISAVTEQPEENYSSIDIGDGSIDEVLYKKAVQIVRNERKSSISYIQRSLRIGYNKAANLVEKMEKDGIVSSPNHTGKREILLPEM</sequence>
<accession>Q9ZCD4</accession>
<feature type="chain" id="PRO_0000098287" description="DNA translocase FtsK">
    <location>
        <begin position="1"/>
        <end position="744"/>
    </location>
</feature>
<feature type="transmembrane region" description="Helical" evidence="2">
    <location>
        <begin position="15"/>
        <end position="35"/>
    </location>
</feature>
<feature type="transmembrane region" description="Helical" evidence="2">
    <location>
        <begin position="62"/>
        <end position="82"/>
    </location>
</feature>
<feature type="transmembrane region" description="Helical" evidence="2">
    <location>
        <begin position="92"/>
        <end position="112"/>
    </location>
</feature>
<feature type="transmembrane region" description="Helical" evidence="2">
    <location>
        <begin position="114"/>
        <end position="134"/>
    </location>
</feature>
<feature type="transmembrane region" description="Helical" evidence="2">
    <location>
        <begin position="138"/>
        <end position="158"/>
    </location>
</feature>
<feature type="transmembrane region" description="Helical" evidence="2">
    <location>
        <begin position="179"/>
        <end position="199"/>
    </location>
</feature>
<feature type="topological domain" description="Cytoplasmic" evidence="2">
    <location>
        <begin position="200"/>
        <end position="744"/>
    </location>
</feature>
<feature type="domain" description="FtsK" evidence="3">
    <location>
        <begin position="386"/>
        <end position="605"/>
    </location>
</feature>
<feature type="binding site" evidence="3">
    <location>
        <begin position="406"/>
        <end position="411"/>
    </location>
    <ligand>
        <name>ATP</name>
        <dbReference type="ChEBI" id="CHEBI:30616"/>
    </ligand>
</feature>
<gene>
    <name type="primary">ftsK</name>
    <name type="ordered locus">RP823</name>
</gene>
<comment type="function">
    <text evidence="1">Essential cell division protein that coordinates cell division and chromosome segregation. The N-terminus is involved in assembly of the cell-division machinery. The C-terminus functions as a DNA motor that moves dsDNA in an ATP-dependent manner towards the dif recombination site, which is located within the replication terminus region. Translocation stops specifically at Xer-dif sites, where FtsK interacts with the Xer recombinase, allowing activation of chromosome unlinking by recombination. FtsK orienting polar sequences (KOPS) guide the direction of DNA translocation. FtsK can remove proteins from DNA as it translocates, but translocation stops specifically at XerCD-dif site, thereby preventing removal of XerC and XerD from dif (By similarity).</text>
</comment>
<comment type="subunit">
    <text evidence="1">Homohexamer. Forms a ring that surrounds DNA (By similarity).</text>
</comment>
<comment type="subcellular location">
    <subcellularLocation>
        <location evidence="1">Cell inner membrane</location>
        <topology evidence="1">Multi-pass membrane protein</topology>
    </subcellularLocation>
    <text evidence="1">Located at the septum.</text>
</comment>
<comment type="domain">
    <text evidence="1">Consists of an N-terminal domain, which is sufficient for the localization to the septal ring and is required for cell division, followed by a linker domain, and a C-terminal domain, which forms the translocation motor involved in chromosome segregation. The C-terminal domain can be further subdivided into alpha, beta and gamma subdomains. The alpha and beta subdomains multimerise to produce a hexameric ring, contain the nucleotide binding motif and form the DNA pump. The gamma subdomain is a regulatory subdomain that controls translocation of DNA by recognition of KOPS motifs and interacts with XerD recombinase (By similarity).</text>
</comment>
<comment type="similarity">
    <text evidence="4">Belongs to the FtsK/SpoIIIE/SftA family.</text>
</comment>
<proteinExistence type="inferred from homology"/>